<proteinExistence type="inferred from homology"/>
<dbReference type="EMBL" id="CM000137">
    <property type="protein sequence ID" value="EAY83858.1"/>
    <property type="molecule type" value="Genomic_DNA"/>
</dbReference>
<dbReference type="STRING" id="39946.A2ZMM4"/>
<dbReference type="EnsemblPlants" id="BGIOSGA035856-TA">
    <property type="protein sequence ID" value="BGIOSGA035856-PA"/>
    <property type="gene ID" value="BGIOSGA035856"/>
</dbReference>
<dbReference type="EnsemblPlants" id="OsPr106_12g0019800.01">
    <property type="protein sequence ID" value="OsPr106_12g0019800.01"/>
    <property type="gene ID" value="OsPr106_12g0019800"/>
</dbReference>
<dbReference type="Gramene" id="BGIOSGA035856-TA">
    <property type="protein sequence ID" value="BGIOSGA035856-PA"/>
    <property type="gene ID" value="BGIOSGA035856"/>
</dbReference>
<dbReference type="Gramene" id="OsPr106_12g0019800.01">
    <property type="protein sequence ID" value="OsPr106_12g0019800.01"/>
    <property type="gene ID" value="OsPr106_12g0019800"/>
</dbReference>
<dbReference type="HOGENOM" id="CLU_066104_1_0_1"/>
<dbReference type="OMA" id="KCCSTTA"/>
<dbReference type="Proteomes" id="UP000007015">
    <property type="component" value="Chromosome 12"/>
</dbReference>
<dbReference type="GO" id="GO:0005886">
    <property type="term" value="C:plasma membrane"/>
    <property type="evidence" value="ECO:0007669"/>
    <property type="project" value="UniProtKB-SubCell"/>
</dbReference>
<dbReference type="InterPro" id="IPR006459">
    <property type="entry name" value="CASP/CASPL"/>
</dbReference>
<dbReference type="InterPro" id="IPR006702">
    <property type="entry name" value="CASP_dom"/>
</dbReference>
<dbReference type="InterPro" id="IPR044173">
    <property type="entry name" value="CASPL"/>
</dbReference>
<dbReference type="NCBIfam" id="TIGR01569">
    <property type="entry name" value="A_tha_TIGR01569"/>
    <property type="match status" value="1"/>
</dbReference>
<dbReference type="PANTHER" id="PTHR36488">
    <property type="entry name" value="CASP-LIKE PROTEIN 1U1"/>
    <property type="match status" value="1"/>
</dbReference>
<dbReference type="PANTHER" id="PTHR36488:SF8">
    <property type="entry name" value="CASP-LIKE PROTEIN 1U1"/>
    <property type="match status" value="1"/>
</dbReference>
<dbReference type="Pfam" id="PF04535">
    <property type="entry name" value="CASP_dom"/>
    <property type="match status" value="1"/>
</dbReference>
<sequence>MDLEKGKKPSEQAAACRIMQVKDKLITLQPVVRACVFLATAVAAVIMGLNKQSYTTVVAIVGTRPVTQTFTAKFKDTPAFVFFVIANAIASGYNLMVLVTRRILQRRAQSLSVHLLDMVILTLLATGSATAASMAQLGKNGNLHARWNPICDKFGSFCNHGGIALMSSFIGVALMLALNLLSAAANSPRSNVTGQ</sequence>
<protein>
    <recommendedName>
        <fullName>CASP-like protein 1B1</fullName>
        <shortName>OsCASPL1B1</shortName>
    </recommendedName>
</protein>
<gene>
    <name type="ORF">OsI_39078</name>
</gene>
<organism>
    <name type="scientific">Oryza sativa subsp. indica</name>
    <name type="common">Rice</name>
    <dbReference type="NCBI Taxonomy" id="39946"/>
    <lineage>
        <taxon>Eukaryota</taxon>
        <taxon>Viridiplantae</taxon>
        <taxon>Streptophyta</taxon>
        <taxon>Embryophyta</taxon>
        <taxon>Tracheophyta</taxon>
        <taxon>Spermatophyta</taxon>
        <taxon>Magnoliopsida</taxon>
        <taxon>Liliopsida</taxon>
        <taxon>Poales</taxon>
        <taxon>Poaceae</taxon>
        <taxon>BOP clade</taxon>
        <taxon>Oryzoideae</taxon>
        <taxon>Oryzeae</taxon>
        <taxon>Oryzinae</taxon>
        <taxon>Oryza</taxon>
        <taxon>Oryza sativa</taxon>
    </lineage>
</organism>
<keyword id="KW-1003">Cell membrane</keyword>
<keyword id="KW-0472">Membrane</keyword>
<keyword id="KW-1185">Reference proteome</keyword>
<keyword id="KW-0812">Transmembrane</keyword>
<keyword id="KW-1133">Transmembrane helix</keyword>
<reference key="1">
    <citation type="journal article" date="2005" name="PLoS Biol.">
        <title>The genomes of Oryza sativa: a history of duplications.</title>
        <authorList>
            <person name="Yu J."/>
            <person name="Wang J."/>
            <person name="Lin W."/>
            <person name="Li S."/>
            <person name="Li H."/>
            <person name="Zhou J."/>
            <person name="Ni P."/>
            <person name="Dong W."/>
            <person name="Hu S."/>
            <person name="Zeng C."/>
            <person name="Zhang J."/>
            <person name="Zhang Y."/>
            <person name="Li R."/>
            <person name="Xu Z."/>
            <person name="Li S."/>
            <person name="Li X."/>
            <person name="Zheng H."/>
            <person name="Cong L."/>
            <person name="Lin L."/>
            <person name="Yin J."/>
            <person name="Geng J."/>
            <person name="Li G."/>
            <person name="Shi J."/>
            <person name="Liu J."/>
            <person name="Lv H."/>
            <person name="Li J."/>
            <person name="Wang J."/>
            <person name="Deng Y."/>
            <person name="Ran L."/>
            <person name="Shi X."/>
            <person name="Wang X."/>
            <person name="Wu Q."/>
            <person name="Li C."/>
            <person name="Ren X."/>
            <person name="Wang J."/>
            <person name="Wang X."/>
            <person name="Li D."/>
            <person name="Liu D."/>
            <person name="Zhang X."/>
            <person name="Ji Z."/>
            <person name="Zhao W."/>
            <person name="Sun Y."/>
            <person name="Zhang Z."/>
            <person name="Bao J."/>
            <person name="Han Y."/>
            <person name="Dong L."/>
            <person name="Ji J."/>
            <person name="Chen P."/>
            <person name="Wu S."/>
            <person name="Liu J."/>
            <person name="Xiao Y."/>
            <person name="Bu D."/>
            <person name="Tan J."/>
            <person name="Yang L."/>
            <person name="Ye C."/>
            <person name="Zhang J."/>
            <person name="Xu J."/>
            <person name="Zhou Y."/>
            <person name="Yu Y."/>
            <person name="Zhang B."/>
            <person name="Zhuang S."/>
            <person name="Wei H."/>
            <person name="Liu B."/>
            <person name="Lei M."/>
            <person name="Yu H."/>
            <person name="Li Y."/>
            <person name="Xu H."/>
            <person name="Wei S."/>
            <person name="He X."/>
            <person name="Fang L."/>
            <person name="Zhang Z."/>
            <person name="Zhang Y."/>
            <person name="Huang X."/>
            <person name="Su Z."/>
            <person name="Tong W."/>
            <person name="Li J."/>
            <person name="Tong Z."/>
            <person name="Li S."/>
            <person name="Ye J."/>
            <person name="Wang L."/>
            <person name="Fang L."/>
            <person name="Lei T."/>
            <person name="Chen C.-S."/>
            <person name="Chen H.-C."/>
            <person name="Xu Z."/>
            <person name="Li H."/>
            <person name="Huang H."/>
            <person name="Zhang F."/>
            <person name="Xu H."/>
            <person name="Li N."/>
            <person name="Zhao C."/>
            <person name="Li S."/>
            <person name="Dong L."/>
            <person name="Huang Y."/>
            <person name="Li L."/>
            <person name="Xi Y."/>
            <person name="Qi Q."/>
            <person name="Li W."/>
            <person name="Zhang B."/>
            <person name="Hu W."/>
            <person name="Zhang Y."/>
            <person name="Tian X."/>
            <person name="Jiao Y."/>
            <person name="Liang X."/>
            <person name="Jin J."/>
            <person name="Gao L."/>
            <person name="Zheng W."/>
            <person name="Hao B."/>
            <person name="Liu S.-M."/>
            <person name="Wang W."/>
            <person name="Yuan L."/>
            <person name="Cao M."/>
            <person name="McDermott J."/>
            <person name="Samudrala R."/>
            <person name="Wang J."/>
            <person name="Wong G.K.-S."/>
            <person name="Yang H."/>
        </authorList>
    </citation>
    <scope>NUCLEOTIDE SEQUENCE [LARGE SCALE GENOMIC DNA]</scope>
    <source>
        <strain>cv. 93-11</strain>
    </source>
</reference>
<reference key="2">
    <citation type="journal article" date="2014" name="Plant Physiol.">
        <title>Functional and evolutionary analysis of the CASPARIAN STRIP MEMBRANE DOMAIN PROTEIN family.</title>
        <authorList>
            <person name="Roppolo D."/>
            <person name="Boeckmann B."/>
            <person name="Pfister A."/>
            <person name="Boutet E."/>
            <person name="Rubio M.C."/>
            <person name="Denervaud-Tendon V."/>
            <person name="Vermeer J.E."/>
            <person name="Gheyselinck J."/>
            <person name="Xenarios I."/>
            <person name="Geldner N."/>
        </authorList>
    </citation>
    <scope>GENE FAMILY</scope>
    <scope>NOMENCLATURE</scope>
</reference>
<evidence type="ECO:0000250" key="1"/>
<evidence type="ECO:0000255" key="2"/>
<evidence type="ECO:0000305" key="3"/>
<accession>A2ZMM4</accession>
<comment type="subunit">
    <text evidence="1">Homodimer and heterodimers.</text>
</comment>
<comment type="subcellular location">
    <subcellularLocation>
        <location evidence="1">Cell membrane</location>
        <topology evidence="1">Multi-pass membrane protein</topology>
    </subcellularLocation>
</comment>
<comment type="similarity">
    <text evidence="3">Belongs to the Casparian strip membrane proteins (CASP) family.</text>
</comment>
<name>CSPL5_ORYSI</name>
<feature type="chain" id="PRO_0000412021" description="CASP-like protein 1B1">
    <location>
        <begin position="1"/>
        <end position="195"/>
    </location>
</feature>
<feature type="topological domain" description="Cytoplasmic" evidence="2">
    <location>
        <begin position="1"/>
        <end position="25"/>
    </location>
</feature>
<feature type="transmembrane region" description="Helical" evidence="2">
    <location>
        <begin position="26"/>
        <end position="46"/>
    </location>
</feature>
<feature type="topological domain" description="Extracellular" evidence="2">
    <location>
        <begin position="47"/>
        <end position="78"/>
    </location>
</feature>
<feature type="transmembrane region" description="Helical" evidence="2">
    <location>
        <begin position="79"/>
        <end position="99"/>
    </location>
</feature>
<feature type="topological domain" description="Cytoplasmic" evidence="2">
    <location>
        <begin position="100"/>
        <end position="114"/>
    </location>
</feature>
<feature type="transmembrane region" description="Helical" evidence="2">
    <location>
        <begin position="115"/>
        <end position="135"/>
    </location>
</feature>
<feature type="topological domain" description="Extracellular" evidence="2">
    <location>
        <begin position="136"/>
        <end position="160"/>
    </location>
</feature>
<feature type="transmembrane region" description="Helical" evidence="2">
    <location>
        <begin position="161"/>
        <end position="181"/>
    </location>
</feature>
<feature type="topological domain" description="Cytoplasmic" evidence="2">
    <location>
        <begin position="182"/>
        <end position="195"/>
    </location>
</feature>